<dbReference type="EC" id="6.1.1.16" evidence="1"/>
<dbReference type="EMBL" id="CP001120">
    <property type="protein sequence ID" value="ACF70231.1"/>
    <property type="molecule type" value="Genomic_DNA"/>
</dbReference>
<dbReference type="RefSeq" id="WP_000912377.1">
    <property type="nucleotide sequence ID" value="NC_011083.1"/>
</dbReference>
<dbReference type="SMR" id="B4TA89"/>
<dbReference type="KEGG" id="seh:SeHA_C0645"/>
<dbReference type="HOGENOM" id="CLU_013528_0_1_6"/>
<dbReference type="Proteomes" id="UP000001866">
    <property type="component" value="Chromosome"/>
</dbReference>
<dbReference type="GO" id="GO:0005829">
    <property type="term" value="C:cytosol"/>
    <property type="evidence" value="ECO:0007669"/>
    <property type="project" value="TreeGrafter"/>
</dbReference>
<dbReference type="GO" id="GO:0005524">
    <property type="term" value="F:ATP binding"/>
    <property type="evidence" value="ECO:0007669"/>
    <property type="project" value="UniProtKB-UniRule"/>
</dbReference>
<dbReference type="GO" id="GO:0004817">
    <property type="term" value="F:cysteine-tRNA ligase activity"/>
    <property type="evidence" value="ECO:0007669"/>
    <property type="project" value="UniProtKB-UniRule"/>
</dbReference>
<dbReference type="GO" id="GO:0008270">
    <property type="term" value="F:zinc ion binding"/>
    <property type="evidence" value="ECO:0007669"/>
    <property type="project" value="UniProtKB-UniRule"/>
</dbReference>
<dbReference type="GO" id="GO:0006423">
    <property type="term" value="P:cysteinyl-tRNA aminoacylation"/>
    <property type="evidence" value="ECO:0007669"/>
    <property type="project" value="UniProtKB-UniRule"/>
</dbReference>
<dbReference type="CDD" id="cd07963">
    <property type="entry name" value="Anticodon_Ia_Cys"/>
    <property type="match status" value="1"/>
</dbReference>
<dbReference type="CDD" id="cd00672">
    <property type="entry name" value="CysRS_core"/>
    <property type="match status" value="1"/>
</dbReference>
<dbReference type="FunFam" id="1.20.120.1910:FF:000001">
    <property type="entry name" value="Cysteine--tRNA ligase"/>
    <property type="match status" value="1"/>
</dbReference>
<dbReference type="FunFam" id="3.40.50.620:FF:000009">
    <property type="entry name" value="Cysteine--tRNA ligase"/>
    <property type="match status" value="1"/>
</dbReference>
<dbReference type="Gene3D" id="1.20.120.1910">
    <property type="entry name" value="Cysteine-tRNA ligase, C-terminal anti-codon recognition domain"/>
    <property type="match status" value="1"/>
</dbReference>
<dbReference type="Gene3D" id="3.40.50.620">
    <property type="entry name" value="HUPs"/>
    <property type="match status" value="1"/>
</dbReference>
<dbReference type="HAMAP" id="MF_00041">
    <property type="entry name" value="Cys_tRNA_synth"/>
    <property type="match status" value="1"/>
</dbReference>
<dbReference type="InterPro" id="IPR015803">
    <property type="entry name" value="Cys-tRNA-ligase"/>
</dbReference>
<dbReference type="InterPro" id="IPR015273">
    <property type="entry name" value="Cys-tRNA-synt_Ia_DALR"/>
</dbReference>
<dbReference type="InterPro" id="IPR024909">
    <property type="entry name" value="Cys-tRNA/MSH_ligase"/>
</dbReference>
<dbReference type="InterPro" id="IPR056411">
    <property type="entry name" value="CysS_C"/>
</dbReference>
<dbReference type="InterPro" id="IPR014729">
    <property type="entry name" value="Rossmann-like_a/b/a_fold"/>
</dbReference>
<dbReference type="InterPro" id="IPR032678">
    <property type="entry name" value="tRNA-synt_1_cat_dom"/>
</dbReference>
<dbReference type="InterPro" id="IPR009080">
    <property type="entry name" value="tRNAsynth_Ia_anticodon-bd"/>
</dbReference>
<dbReference type="NCBIfam" id="TIGR00435">
    <property type="entry name" value="cysS"/>
    <property type="match status" value="1"/>
</dbReference>
<dbReference type="PANTHER" id="PTHR10890:SF3">
    <property type="entry name" value="CYSTEINE--TRNA LIGASE, CYTOPLASMIC"/>
    <property type="match status" value="1"/>
</dbReference>
<dbReference type="PANTHER" id="PTHR10890">
    <property type="entry name" value="CYSTEINYL-TRNA SYNTHETASE"/>
    <property type="match status" value="1"/>
</dbReference>
<dbReference type="Pfam" id="PF23493">
    <property type="entry name" value="CysS_C"/>
    <property type="match status" value="1"/>
</dbReference>
<dbReference type="Pfam" id="PF09190">
    <property type="entry name" value="DALR_2"/>
    <property type="match status" value="1"/>
</dbReference>
<dbReference type="Pfam" id="PF01406">
    <property type="entry name" value="tRNA-synt_1e"/>
    <property type="match status" value="1"/>
</dbReference>
<dbReference type="PRINTS" id="PR00983">
    <property type="entry name" value="TRNASYNTHCYS"/>
</dbReference>
<dbReference type="SMART" id="SM00840">
    <property type="entry name" value="DALR_2"/>
    <property type="match status" value="1"/>
</dbReference>
<dbReference type="SUPFAM" id="SSF47323">
    <property type="entry name" value="Anticodon-binding domain of a subclass of class I aminoacyl-tRNA synthetases"/>
    <property type="match status" value="1"/>
</dbReference>
<dbReference type="SUPFAM" id="SSF52374">
    <property type="entry name" value="Nucleotidylyl transferase"/>
    <property type="match status" value="1"/>
</dbReference>
<reference key="1">
    <citation type="journal article" date="2011" name="J. Bacteriol.">
        <title>Comparative genomics of 28 Salmonella enterica isolates: evidence for CRISPR-mediated adaptive sublineage evolution.</title>
        <authorList>
            <person name="Fricke W.F."/>
            <person name="Mammel M.K."/>
            <person name="McDermott P.F."/>
            <person name="Tartera C."/>
            <person name="White D.G."/>
            <person name="Leclerc J.E."/>
            <person name="Ravel J."/>
            <person name="Cebula T.A."/>
        </authorList>
    </citation>
    <scope>NUCLEOTIDE SEQUENCE [LARGE SCALE GENOMIC DNA]</scope>
    <source>
        <strain>SL476</strain>
    </source>
</reference>
<sequence>MLKIFNTLTRQKEEFKPIHAGEVGMYVCGITVYDLCHIGHGRTFVAFDVVARYLRFLGYKLKYVRNITDIDDKIIKRANENGESFVALVDRMIAEMHQDFDALNILRPDSEPRATHHIQEIIELTRTLIEKGHAYVADNGDVMFDVPTDPTYGQLSRQDLEQLQAGARVDVVDVKRNPMDFVLWKMSKEGEPSWPSPWGEGRPGWHIECSAMNCKQLGNHFDIHGGGSDLMFPHHENEIAQSTCAHDGEYVNYWMHSGMVMVDREKMSKSLGNFFTVRDVLKYYDAETVRYFLMSGHYRSQLNYSEENLKQARASLERLYTALRGTDKSAAPAGGEAFEARFVEAMNDDFNTPEAYSVLFDMAREVNRLKGEDMTAANAMASHLRKISGVLGLLEQEPDVFLQSGAQADDGEVAEIEALIQQRLDARKAKDWAAADAARDRLTEMGIILEDGPQGTTWRRK</sequence>
<comment type="catalytic activity">
    <reaction evidence="1">
        <text>tRNA(Cys) + L-cysteine + ATP = L-cysteinyl-tRNA(Cys) + AMP + diphosphate</text>
        <dbReference type="Rhea" id="RHEA:17773"/>
        <dbReference type="Rhea" id="RHEA-COMP:9661"/>
        <dbReference type="Rhea" id="RHEA-COMP:9679"/>
        <dbReference type="ChEBI" id="CHEBI:30616"/>
        <dbReference type="ChEBI" id="CHEBI:33019"/>
        <dbReference type="ChEBI" id="CHEBI:35235"/>
        <dbReference type="ChEBI" id="CHEBI:78442"/>
        <dbReference type="ChEBI" id="CHEBI:78517"/>
        <dbReference type="ChEBI" id="CHEBI:456215"/>
        <dbReference type="EC" id="6.1.1.16"/>
    </reaction>
</comment>
<comment type="cofactor">
    <cofactor evidence="1">
        <name>Zn(2+)</name>
        <dbReference type="ChEBI" id="CHEBI:29105"/>
    </cofactor>
    <text evidence="1">Binds 1 zinc ion per subunit.</text>
</comment>
<comment type="subunit">
    <text evidence="1">Monomer.</text>
</comment>
<comment type="subcellular location">
    <subcellularLocation>
        <location evidence="1">Cytoplasm</location>
    </subcellularLocation>
</comment>
<comment type="similarity">
    <text evidence="1">Belongs to the class-I aminoacyl-tRNA synthetase family.</text>
</comment>
<proteinExistence type="inferred from homology"/>
<organism>
    <name type="scientific">Salmonella heidelberg (strain SL476)</name>
    <dbReference type="NCBI Taxonomy" id="454169"/>
    <lineage>
        <taxon>Bacteria</taxon>
        <taxon>Pseudomonadati</taxon>
        <taxon>Pseudomonadota</taxon>
        <taxon>Gammaproteobacteria</taxon>
        <taxon>Enterobacterales</taxon>
        <taxon>Enterobacteriaceae</taxon>
        <taxon>Salmonella</taxon>
    </lineage>
</organism>
<name>SYC_SALHS</name>
<feature type="chain" id="PRO_1000090869" description="Cysteine--tRNA ligase">
    <location>
        <begin position="1"/>
        <end position="461"/>
    </location>
</feature>
<feature type="short sequence motif" description="'HIGH' region">
    <location>
        <begin position="30"/>
        <end position="40"/>
    </location>
</feature>
<feature type="short sequence motif" description="'KMSKS' region">
    <location>
        <begin position="266"/>
        <end position="270"/>
    </location>
</feature>
<feature type="binding site" evidence="1">
    <location>
        <position position="28"/>
    </location>
    <ligand>
        <name>Zn(2+)</name>
        <dbReference type="ChEBI" id="CHEBI:29105"/>
    </ligand>
</feature>
<feature type="binding site" evidence="1">
    <location>
        <position position="209"/>
    </location>
    <ligand>
        <name>Zn(2+)</name>
        <dbReference type="ChEBI" id="CHEBI:29105"/>
    </ligand>
</feature>
<feature type="binding site" evidence="1">
    <location>
        <position position="234"/>
    </location>
    <ligand>
        <name>Zn(2+)</name>
        <dbReference type="ChEBI" id="CHEBI:29105"/>
    </ligand>
</feature>
<feature type="binding site" evidence="1">
    <location>
        <position position="238"/>
    </location>
    <ligand>
        <name>Zn(2+)</name>
        <dbReference type="ChEBI" id="CHEBI:29105"/>
    </ligand>
</feature>
<feature type="binding site" evidence="1">
    <location>
        <position position="269"/>
    </location>
    <ligand>
        <name>ATP</name>
        <dbReference type="ChEBI" id="CHEBI:30616"/>
    </ligand>
</feature>
<accession>B4TA89</accession>
<keyword id="KW-0030">Aminoacyl-tRNA synthetase</keyword>
<keyword id="KW-0067">ATP-binding</keyword>
<keyword id="KW-0963">Cytoplasm</keyword>
<keyword id="KW-0436">Ligase</keyword>
<keyword id="KW-0479">Metal-binding</keyword>
<keyword id="KW-0547">Nucleotide-binding</keyword>
<keyword id="KW-0648">Protein biosynthesis</keyword>
<keyword id="KW-0862">Zinc</keyword>
<protein>
    <recommendedName>
        <fullName evidence="1">Cysteine--tRNA ligase</fullName>
        <ecNumber evidence="1">6.1.1.16</ecNumber>
    </recommendedName>
    <alternativeName>
        <fullName evidence="1">Cysteinyl-tRNA synthetase</fullName>
        <shortName evidence="1">CysRS</shortName>
    </alternativeName>
</protein>
<evidence type="ECO:0000255" key="1">
    <source>
        <dbReference type="HAMAP-Rule" id="MF_00041"/>
    </source>
</evidence>
<gene>
    <name evidence="1" type="primary">cysS</name>
    <name type="ordered locus">SeHA_C0645</name>
</gene>